<sequence>MTPGELRRLYLIIRVFLSYGLDELIPNIRLTLPLRVGRHLFFWLSNRHKDKSLGERLRLALQELGPVWIKFGQMMSTRRDLFPPNIADQLALLQDRVASFDGALARKHIEIAMGGALETWFDDFDSQALASASIAQVHTARLKENGKEVVLKVIRPDILPIIKADVRLMYRLAGWVPKLLPDGRRLRPREVVREYEKTLLDELNLLREAANAIQLRRNFEDSPMLYIPEVYSDYCRESVLVMERIYGIPVSDIAALEDQGTNMKLLAERGVQVFFTQVFRDSFFHADMHPGNIFVSYEHPHDPLYIGIDCGIVGSLNKADKRYLAENFIAFFNRDYRRVAELHVDSGWVPRDTNVEDFEFAIRTVCEPIFEKPLAEISFGHVLLNLFNTARRFNMEVQPQLVLLQKTLLYVEGLGRQLYPQLDLWTTAKPFLESWLRDQVGLPAVIRALKEKAPFWAEKFPELPELVYDSLQQHKLLQQSVEKLTIQIQGQQQRQGQSRYLFGVGATLLVSGTILFLADATEVSTGFIVAGALAWFIGWRRTC</sequence>
<comment type="function">
    <text evidence="1">Is probably a protein kinase regulator of UbiI activity which is involved in aerobic coenzyme Q (ubiquinone) biosynthesis.</text>
</comment>
<comment type="pathway">
    <text>Cofactor biosynthesis; ubiquinone biosynthesis [regulation].</text>
</comment>
<comment type="subcellular location">
    <subcellularLocation>
        <location evidence="1">Cell inner membrane</location>
        <topology evidence="1">Single-pass membrane protein</topology>
    </subcellularLocation>
</comment>
<comment type="similarity">
    <text evidence="1">Belongs to the ABC1 family. UbiB subfamily.</text>
</comment>
<accession>B2K0Y6</accession>
<proteinExistence type="inferred from homology"/>
<protein>
    <recommendedName>
        <fullName evidence="1">Probable protein kinase UbiB</fullName>
        <ecNumber evidence="1">2.7.-.-</ecNumber>
    </recommendedName>
    <alternativeName>
        <fullName evidence="1">Ubiquinone biosynthesis protein UbiB</fullName>
    </alternativeName>
</protein>
<feature type="chain" id="PRO_1000123935" description="Probable protein kinase UbiB">
    <location>
        <begin position="1"/>
        <end position="543"/>
    </location>
</feature>
<feature type="transmembrane region" description="Helical" evidence="1">
    <location>
        <begin position="517"/>
        <end position="539"/>
    </location>
</feature>
<feature type="domain" description="Protein kinase" evidence="1">
    <location>
        <begin position="123"/>
        <end position="501"/>
    </location>
</feature>
<feature type="active site" description="Proton acceptor" evidence="1">
    <location>
        <position position="287"/>
    </location>
</feature>
<feature type="binding site" evidence="1">
    <location>
        <begin position="129"/>
        <end position="137"/>
    </location>
    <ligand>
        <name>ATP</name>
        <dbReference type="ChEBI" id="CHEBI:30616"/>
    </ligand>
</feature>
<feature type="binding site" evidence="1">
    <location>
        <position position="152"/>
    </location>
    <ligand>
        <name>ATP</name>
        <dbReference type="ChEBI" id="CHEBI:30616"/>
    </ligand>
</feature>
<gene>
    <name evidence="1" type="primary">ubiB</name>
    <name type="ordered locus">YPTS_0273</name>
</gene>
<evidence type="ECO:0000255" key="1">
    <source>
        <dbReference type="HAMAP-Rule" id="MF_00414"/>
    </source>
</evidence>
<reference key="1">
    <citation type="submission" date="2008-04" db="EMBL/GenBank/DDBJ databases">
        <title>Complete sequence of Yersinia pseudotuberculosis PB1/+.</title>
        <authorList>
            <person name="Copeland A."/>
            <person name="Lucas S."/>
            <person name="Lapidus A."/>
            <person name="Glavina del Rio T."/>
            <person name="Dalin E."/>
            <person name="Tice H."/>
            <person name="Bruce D."/>
            <person name="Goodwin L."/>
            <person name="Pitluck S."/>
            <person name="Munk A.C."/>
            <person name="Brettin T."/>
            <person name="Detter J.C."/>
            <person name="Han C."/>
            <person name="Tapia R."/>
            <person name="Schmutz J."/>
            <person name="Larimer F."/>
            <person name="Land M."/>
            <person name="Hauser L."/>
            <person name="Challacombe J.F."/>
            <person name="Green L."/>
            <person name="Lindler L.E."/>
            <person name="Nikolich M.P."/>
            <person name="Richardson P."/>
        </authorList>
    </citation>
    <scope>NUCLEOTIDE SEQUENCE [LARGE SCALE GENOMIC DNA]</scope>
    <source>
        <strain>PB1/+</strain>
    </source>
</reference>
<keyword id="KW-0067">ATP-binding</keyword>
<keyword id="KW-0997">Cell inner membrane</keyword>
<keyword id="KW-1003">Cell membrane</keyword>
<keyword id="KW-0418">Kinase</keyword>
<keyword id="KW-0472">Membrane</keyword>
<keyword id="KW-0547">Nucleotide-binding</keyword>
<keyword id="KW-0808">Transferase</keyword>
<keyword id="KW-0812">Transmembrane</keyword>
<keyword id="KW-1133">Transmembrane helix</keyword>
<keyword id="KW-0831">Ubiquinone biosynthesis</keyword>
<organism>
    <name type="scientific">Yersinia pseudotuberculosis serotype IB (strain PB1/+)</name>
    <dbReference type="NCBI Taxonomy" id="502801"/>
    <lineage>
        <taxon>Bacteria</taxon>
        <taxon>Pseudomonadati</taxon>
        <taxon>Pseudomonadota</taxon>
        <taxon>Gammaproteobacteria</taxon>
        <taxon>Enterobacterales</taxon>
        <taxon>Yersiniaceae</taxon>
        <taxon>Yersinia</taxon>
    </lineage>
</organism>
<dbReference type="EC" id="2.7.-.-" evidence="1"/>
<dbReference type="EMBL" id="CP001048">
    <property type="protein sequence ID" value="ACC87268.1"/>
    <property type="molecule type" value="Genomic_DNA"/>
</dbReference>
<dbReference type="RefSeq" id="WP_002211535.1">
    <property type="nucleotide sequence ID" value="NZ_CP009780.1"/>
</dbReference>
<dbReference type="SMR" id="B2K0Y6"/>
<dbReference type="GeneID" id="57974929"/>
<dbReference type="KEGG" id="ypb:YPTS_0273"/>
<dbReference type="PATRIC" id="fig|502801.10.peg.3951"/>
<dbReference type="UniPathway" id="UPA00232"/>
<dbReference type="GO" id="GO:0005886">
    <property type="term" value="C:plasma membrane"/>
    <property type="evidence" value="ECO:0007669"/>
    <property type="project" value="UniProtKB-SubCell"/>
</dbReference>
<dbReference type="GO" id="GO:0005524">
    <property type="term" value="F:ATP binding"/>
    <property type="evidence" value="ECO:0007669"/>
    <property type="project" value="UniProtKB-KW"/>
</dbReference>
<dbReference type="GO" id="GO:0004672">
    <property type="term" value="F:protein kinase activity"/>
    <property type="evidence" value="ECO:0007669"/>
    <property type="project" value="UniProtKB-UniRule"/>
</dbReference>
<dbReference type="GO" id="GO:0010795">
    <property type="term" value="P:regulation of ubiquinone biosynthetic process"/>
    <property type="evidence" value="ECO:0007669"/>
    <property type="project" value="UniProtKB-UniRule"/>
</dbReference>
<dbReference type="GO" id="GO:0006744">
    <property type="term" value="P:ubiquinone biosynthetic process"/>
    <property type="evidence" value="ECO:0007669"/>
    <property type="project" value="UniProtKB-UniPathway"/>
</dbReference>
<dbReference type="CDD" id="cd13972">
    <property type="entry name" value="UbiB"/>
    <property type="match status" value="1"/>
</dbReference>
<dbReference type="HAMAP" id="MF_00414">
    <property type="entry name" value="UbiB"/>
    <property type="match status" value="1"/>
</dbReference>
<dbReference type="InterPro" id="IPR004147">
    <property type="entry name" value="ABC1_dom"/>
</dbReference>
<dbReference type="InterPro" id="IPR011009">
    <property type="entry name" value="Kinase-like_dom_sf"/>
</dbReference>
<dbReference type="InterPro" id="IPR010232">
    <property type="entry name" value="UbiB"/>
</dbReference>
<dbReference type="InterPro" id="IPR045308">
    <property type="entry name" value="UbiB_bact"/>
</dbReference>
<dbReference type="InterPro" id="IPR050154">
    <property type="entry name" value="UbiB_kinase"/>
</dbReference>
<dbReference type="NCBIfam" id="NF003404">
    <property type="entry name" value="PRK04750.1"/>
    <property type="match status" value="1"/>
</dbReference>
<dbReference type="NCBIfam" id="TIGR01982">
    <property type="entry name" value="UbiB"/>
    <property type="match status" value="1"/>
</dbReference>
<dbReference type="PANTHER" id="PTHR10566">
    <property type="entry name" value="CHAPERONE-ACTIVITY OF BC1 COMPLEX CABC1 -RELATED"/>
    <property type="match status" value="1"/>
</dbReference>
<dbReference type="PANTHER" id="PTHR10566:SF113">
    <property type="entry name" value="PROTEIN ACTIVITY OF BC1 COMPLEX KINASE 7, CHLOROPLASTIC"/>
    <property type="match status" value="1"/>
</dbReference>
<dbReference type="Pfam" id="PF03109">
    <property type="entry name" value="ABC1"/>
    <property type="match status" value="1"/>
</dbReference>
<dbReference type="SUPFAM" id="SSF56112">
    <property type="entry name" value="Protein kinase-like (PK-like)"/>
    <property type="match status" value="1"/>
</dbReference>
<name>UBIB_YERPB</name>